<accession>A4VRW2</accession>
<proteinExistence type="inferred from homology"/>
<sequence>MSERTAYVERNTLETQVKVTINLDGTGKARFAIGVPFLEHMLDQIARHGLIDLDIECNGDLHIDDHHTVEDVGITLGQAFAKAIGDKKGMTRYGHAYVPLDEALSRVVIDFSGRPGLTMHVPYTRAVVGKFDVDLFQEFFQGFVNHALVTLHIDNLRGTNTHHQIETVFKAFGRALRMAIELDPRMAGQMPSTKGCL</sequence>
<name>HIS7_STUS1</name>
<organism>
    <name type="scientific">Stutzerimonas stutzeri (strain A1501)</name>
    <name type="common">Pseudomonas stutzeri</name>
    <dbReference type="NCBI Taxonomy" id="379731"/>
    <lineage>
        <taxon>Bacteria</taxon>
        <taxon>Pseudomonadati</taxon>
        <taxon>Pseudomonadota</taxon>
        <taxon>Gammaproteobacteria</taxon>
        <taxon>Pseudomonadales</taxon>
        <taxon>Pseudomonadaceae</taxon>
        <taxon>Stutzerimonas</taxon>
    </lineage>
</organism>
<protein>
    <recommendedName>
        <fullName evidence="1">Imidazoleglycerol-phosphate dehydratase</fullName>
        <shortName evidence="1">IGPD</shortName>
        <ecNumber evidence="1">4.2.1.19</ecNumber>
    </recommendedName>
</protein>
<keyword id="KW-0028">Amino-acid biosynthesis</keyword>
<keyword id="KW-0963">Cytoplasm</keyword>
<keyword id="KW-0368">Histidine biosynthesis</keyword>
<keyword id="KW-0456">Lyase</keyword>
<keyword id="KW-1185">Reference proteome</keyword>
<feature type="chain" id="PRO_1000010336" description="Imidazoleglycerol-phosphate dehydratase">
    <location>
        <begin position="1"/>
        <end position="197"/>
    </location>
</feature>
<dbReference type="EC" id="4.2.1.19" evidence="1"/>
<dbReference type="EMBL" id="CP000304">
    <property type="protein sequence ID" value="ABP81713.1"/>
    <property type="molecule type" value="Genomic_DNA"/>
</dbReference>
<dbReference type="RefSeq" id="WP_011915093.1">
    <property type="nucleotide sequence ID" value="NC_009434.1"/>
</dbReference>
<dbReference type="SMR" id="A4VRW2"/>
<dbReference type="GeneID" id="75212482"/>
<dbReference type="KEGG" id="psa:PST_4090"/>
<dbReference type="eggNOG" id="COG0131">
    <property type="taxonomic scope" value="Bacteria"/>
</dbReference>
<dbReference type="HOGENOM" id="CLU_044308_3_0_6"/>
<dbReference type="UniPathway" id="UPA00031">
    <property type="reaction ID" value="UER00011"/>
</dbReference>
<dbReference type="Proteomes" id="UP000000233">
    <property type="component" value="Chromosome"/>
</dbReference>
<dbReference type="GO" id="GO:0005737">
    <property type="term" value="C:cytoplasm"/>
    <property type="evidence" value="ECO:0007669"/>
    <property type="project" value="UniProtKB-SubCell"/>
</dbReference>
<dbReference type="GO" id="GO:0004424">
    <property type="term" value="F:imidazoleglycerol-phosphate dehydratase activity"/>
    <property type="evidence" value="ECO:0007669"/>
    <property type="project" value="UniProtKB-UniRule"/>
</dbReference>
<dbReference type="GO" id="GO:0000105">
    <property type="term" value="P:L-histidine biosynthetic process"/>
    <property type="evidence" value="ECO:0007669"/>
    <property type="project" value="UniProtKB-UniRule"/>
</dbReference>
<dbReference type="CDD" id="cd07914">
    <property type="entry name" value="IGPD"/>
    <property type="match status" value="1"/>
</dbReference>
<dbReference type="FunFam" id="3.30.230.40:FF:000002">
    <property type="entry name" value="Imidazoleglycerol-phosphate dehydratase"/>
    <property type="match status" value="1"/>
</dbReference>
<dbReference type="FunFam" id="3.30.230.40:FF:000003">
    <property type="entry name" value="Imidazoleglycerol-phosphate dehydratase HisB"/>
    <property type="match status" value="1"/>
</dbReference>
<dbReference type="Gene3D" id="3.30.230.40">
    <property type="entry name" value="Imidazole glycerol phosphate dehydratase, domain 1"/>
    <property type="match status" value="2"/>
</dbReference>
<dbReference type="HAMAP" id="MF_00076">
    <property type="entry name" value="HisB"/>
    <property type="match status" value="1"/>
</dbReference>
<dbReference type="InterPro" id="IPR038494">
    <property type="entry name" value="IGPD_sf"/>
</dbReference>
<dbReference type="InterPro" id="IPR000807">
    <property type="entry name" value="ImidazoleglycerolP_deHydtase"/>
</dbReference>
<dbReference type="InterPro" id="IPR020565">
    <property type="entry name" value="ImidazoleglycerP_deHydtase_CS"/>
</dbReference>
<dbReference type="InterPro" id="IPR020568">
    <property type="entry name" value="Ribosomal_Su5_D2-typ_SF"/>
</dbReference>
<dbReference type="NCBIfam" id="NF002106">
    <property type="entry name" value="PRK00951.1-1"/>
    <property type="match status" value="1"/>
</dbReference>
<dbReference type="NCBIfam" id="NF002109">
    <property type="entry name" value="PRK00951.1-5"/>
    <property type="match status" value="1"/>
</dbReference>
<dbReference type="NCBIfam" id="NF002111">
    <property type="entry name" value="PRK00951.2-1"/>
    <property type="match status" value="1"/>
</dbReference>
<dbReference type="NCBIfam" id="NF002114">
    <property type="entry name" value="PRK00951.2-4"/>
    <property type="match status" value="1"/>
</dbReference>
<dbReference type="PANTHER" id="PTHR23133:SF2">
    <property type="entry name" value="IMIDAZOLEGLYCEROL-PHOSPHATE DEHYDRATASE"/>
    <property type="match status" value="1"/>
</dbReference>
<dbReference type="PANTHER" id="PTHR23133">
    <property type="entry name" value="IMIDAZOLEGLYCEROL-PHOSPHATE DEHYDRATASE HIS7"/>
    <property type="match status" value="1"/>
</dbReference>
<dbReference type="Pfam" id="PF00475">
    <property type="entry name" value="IGPD"/>
    <property type="match status" value="1"/>
</dbReference>
<dbReference type="SUPFAM" id="SSF54211">
    <property type="entry name" value="Ribosomal protein S5 domain 2-like"/>
    <property type="match status" value="2"/>
</dbReference>
<dbReference type="PROSITE" id="PS00954">
    <property type="entry name" value="IGP_DEHYDRATASE_1"/>
    <property type="match status" value="1"/>
</dbReference>
<dbReference type="PROSITE" id="PS00955">
    <property type="entry name" value="IGP_DEHYDRATASE_2"/>
    <property type="match status" value="1"/>
</dbReference>
<evidence type="ECO:0000255" key="1">
    <source>
        <dbReference type="HAMAP-Rule" id="MF_00076"/>
    </source>
</evidence>
<comment type="catalytic activity">
    <reaction evidence="1">
        <text>D-erythro-1-(imidazol-4-yl)glycerol 3-phosphate = 3-(imidazol-4-yl)-2-oxopropyl phosphate + H2O</text>
        <dbReference type="Rhea" id="RHEA:11040"/>
        <dbReference type="ChEBI" id="CHEBI:15377"/>
        <dbReference type="ChEBI" id="CHEBI:57766"/>
        <dbReference type="ChEBI" id="CHEBI:58278"/>
        <dbReference type="EC" id="4.2.1.19"/>
    </reaction>
</comment>
<comment type="pathway">
    <text evidence="1">Amino-acid biosynthesis; L-histidine biosynthesis; L-histidine from 5-phospho-alpha-D-ribose 1-diphosphate: step 6/9.</text>
</comment>
<comment type="subcellular location">
    <subcellularLocation>
        <location evidence="1">Cytoplasm</location>
    </subcellularLocation>
</comment>
<comment type="similarity">
    <text evidence="1">Belongs to the imidazoleglycerol-phosphate dehydratase family.</text>
</comment>
<reference key="1">
    <citation type="journal article" date="2008" name="Proc. Natl. Acad. Sci. U.S.A.">
        <title>Nitrogen fixation island and rhizosphere competence traits in the genome of root-associated Pseudomonas stutzeri A1501.</title>
        <authorList>
            <person name="Yan Y."/>
            <person name="Yang J."/>
            <person name="Dou Y."/>
            <person name="Chen M."/>
            <person name="Ping S."/>
            <person name="Peng J."/>
            <person name="Lu W."/>
            <person name="Zhang W."/>
            <person name="Yao Z."/>
            <person name="Li H."/>
            <person name="Liu W."/>
            <person name="He S."/>
            <person name="Geng L."/>
            <person name="Zhang X."/>
            <person name="Yang F."/>
            <person name="Yu H."/>
            <person name="Zhan Y."/>
            <person name="Li D."/>
            <person name="Lin Z."/>
            <person name="Wang Y."/>
            <person name="Elmerich C."/>
            <person name="Lin M."/>
            <person name="Jin Q."/>
        </authorList>
    </citation>
    <scope>NUCLEOTIDE SEQUENCE [LARGE SCALE GENOMIC DNA]</scope>
    <source>
        <strain>A1501</strain>
    </source>
</reference>
<gene>
    <name evidence="1" type="primary">hisB</name>
    <name type="ordered locus">PST_4090</name>
</gene>